<accession>Q0WPA5</accession>
<accession>Q9C8H5</accession>
<proteinExistence type="evidence at transcript level"/>
<evidence type="ECO:0000250" key="1">
    <source>
        <dbReference type="UniProtKB" id="Q9H488"/>
    </source>
</evidence>
<evidence type="ECO:0000269" key="2">
    <source>
    </source>
</evidence>
<evidence type="ECO:0000303" key="3">
    <source>
    </source>
</evidence>
<evidence type="ECO:0000305" key="4"/>
<evidence type="ECO:0000312" key="5">
    <source>
        <dbReference type="Araport" id="AT1G51630"/>
    </source>
</evidence>
<evidence type="ECO:0000312" key="6">
    <source>
        <dbReference type="EMBL" id="AAG50891.1"/>
    </source>
</evidence>
<evidence type="ECO:0000312" key="7">
    <source>
        <dbReference type="EMBL" id="ARJ31412.1"/>
    </source>
</evidence>
<dbReference type="EC" id="2.4.1.-" evidence="4"/>
<dbReference type="EMBL" id="KY906048">
    <property type="protein sequence ID" value="ARJ31412.1"/>
    <property type="molecule type" value="mRNA"/>
</dbReference>
<dbReference type="EMBL" id="AC025294">
    <property type="protein sequence ID" value="AAG50891.1"/>
    <property type="status" value="ALT_SEQ"/>
    <property type="molecule type" value="Genomic_DNA"/>
</dbReference>
<dbReference type="EMBL" id="CP002684">
    <property type="protein sequence ID" value="AEE32693.1"/>
    <property type="molecule type" value="Genomic_DNA"/>
</dbReference>
<dbReference type="EMBL" id="AK229174">
    <property type="protein sequence ID" value="BAF01044.1"/>
    <property type="molecule type" value="mRNA"/>
</dbReference>
<dbReference type="PIR" id="A96555">
    <property type="entry name" value="A96555"/>
</dbReference>
<dbReference type="RefSeq" id="NP_175574.2">
    <property type="nucleotide sequence ID" value="NM_104041.5"/>
</dbReference>
<dbReference type="FunCoup" id="Q0WPA5">
    <property type="interactions" value="2728"/>
</dbReference>
<dbReference type="STRING" id="3702.Q0WPA5"/>
<dbReference type="PaxDb" id="3702-AT1G51630.1"/>
<dbReference type="ProteomicsDB" id="239009"/>
<dbReference type="EnsemblPlants" id="AT1G51630.1">
    <property type="protein sequence ID" value="AT1G51630.1"/>
    <property type="gene ID" value="AT1G51630"/>
</dbReference>
<dbReference type="GeneID" id="841588"/>
<dbReference type="Gramene" id="AT1G51630.1">
    <property type="protein sequence ID" value="AT1G51630.1"/>
    <property type="gene ID" value="AT1G51630"/>
</dbReference>
<dbReference type="KEGG" id="ath:AT1G51630"/>
<dbReference type="Araport" id="AT1G51630"/>
<dbReference type="TAIR" id="AT1G51630">
    <property type="gene designation" value="MSR2"/>
</dbReference>
<dbReference type="eggNOG" id="ENOG502QUE8">
    <property type="taxonomic scope" value="Eukaryota"/>
</dbReference>
<dbReference type="HOGENOM" id="CLU_018420_3_0_1"/>
<dbReference type="InParanoid" id="Q0WPA5"/>
<dbReference type="OMA" id="FEDMYDV"/>
<dbReference type="OrthoDB" id="1899018at2759"/>
<dbReference type="PhylomeDB" id="Q0WPA5"/>
<dbReference type="PRO" id="PR:Q0WPA5"/>
<dbReference type="Proteomes" id="UP000006548">
    <property type="component" value="Chromosome 1"/>
</dbReference>
<dbReference type="ExpressionAtlas" id="Q0WPA5">
    <property type="expression patterns" value="baseline and differential"/>
</dbReference>
<dbReference type="GO" id="GO:0005768">
    <property type="term" value="C:endosome"/>
    <property type="evidence" value="ECO:0007005"/>
    <property type="project" value="TAIR"/>
</dbReference>
<dbReference type="GO" id="GO:0005794">
    <property type="term" value="C:Golgi apparatus"/>
    <property type="evidence" value="ECO:0000314"/>
    <property type="project" value="UniProtKB"/>
</dbReference>
<dbReference type="GO" id="GO:0005797">
    <property type="term" value="C:Golgi medial cisterna"/>
    <property type="evidence" value="ECO:0007005"/>
    <property type="project" value="TAIR"/>
</dbReference>
<dbReference type="GO" id="GO:0000139">
    <property type="term" value="C:Golgi membrane"/>
    <property type="evidence" value="ECO:0007669"/>
    <property type="project" value="UniProtKB-SubCell"/>
</dbReference>
<dbReference type="GO" id="GO:0009505">
    <property type="term" value="C:plant-type cell wall"/>
    <property type="evidence" value="ECO:0007005"/>
    <property type="project" value="TAIR"/>
</dbReference>
<dbReference type="GO" id="GO:0005802">
    <property type="term" value="C:trans-Golgi network"/>
    <property type="evidence" value="ECO:0007005"/>
    <property type="project" value="TAIR"/>
</dbReference>
<dbReference type="GO" id="GO:0051753">
    <property type="term" value="F:mannan synthase activity"/>
    <property type="evidence" value="ECO:0000315"/>
    <property type="project" value="UniProtKB"/>
</dbReference>
<dbReference type="GO" id="GO:0052325">
    <property type="term" value="P:cell wall pectin biosynthetic process"/>
    <property type="evidence" value="ECO:0000315"/>
    <property type="project" value="UniProtKB"/>
</dbReference>
<dbReference type="GO" id="GO:0006004">
    <property type="term" value="P:fucose metabolic process"/>
    <property type="evidence" value="ECO:0007669"/>
    <property type="project" value="UniProtKB-KW"/>
</dbReference>
<dbReference type="GO" id="GO:0010412">
    <property type="term" value="P:mannan metabolic process"/>
    <property type="evidence" value="ECO:0000315"/>
    <property type="project" value="UniProtKB"/>
</dbReference>
<dbReference type="GO" id="GO:0097502">
    <property type="term" value="P:mannosylation"/>
    <property type="evidence" value="ECO:0000315"/>
    <property type="project" value="UniProtKB"/>
</dbReference>
<dbReference type="CDD" id="cd11299">
    <property type="entry name" value="O-FucT_plant"/>
    <property type="match status" value="1"/>
</dbReference>
<dbReference type="FunFam" id="3.40.50.11350:FF:000022">
    <property type="entry name" value="Protein MANNAN SYNTHESIS-RELATED 2"/>
    <property type="match status" value="1"/>
</dbReference>
<dbReference type="Gene3D" id="3.40.50.11350">
    <property type="match status" value="1"/>
</dbReference>
<dbReference type="InterPro" id="IPR024709">
    <property type="entry name" value="FucosylTrfase_pln"/>
</dbReference>
<dbReference type="InterPro" id="IPR019378">
    <property type="entry name" value="GDP-Fuc_O-FucTrfase"/>
</dbReference>
<dbReference type="PANTHER" id="PTHR31288">
    <property type="entry name" value="O-FUCOSYLTRANSFERASE FAMILY PROTEIN"/>
    <property type="match status" value="1"/>
</dbReference>
<dbReference type="PANTHER" id="PTHR31288:SF24">
    <property type="entry name" value="PROTEIN MANNAN SYNTHESIS-RELATED 2"/>
    <property type="match status" value="1"/>
</dbReference>
<dbReference type="Pfam" id="PF10250">
    <property type="entry name" value="O-FucT"/>
    <property type="match status" value="1"/>
</dbReference>
<dbReference type="PIRSF" id="PIRSF009360">
    <property type="entry name" value="UCP009360"/>
    <property type="match status" value="1"/>
</dbReference>
<reference key="1">
    <citation type="submission" date="2017-04" db="EMBL/GenBank/DDBJ databases">
        <title>Arabidopsis glycosyltransferases: an update.</title>
        <authorList>
            <person name="Zeng W."/>
            <person name="Gluza P."/>
            <person name="Heazlewood J."/>
        </authorList>
    </citation>
    <scope>NUCLEOTIDE SEQUENCE [MRNA]</scope>
    <source>
        <strain>cv. Columbia</strain>
    </source>
</reference>
<reference key="2">
    <citation type="journal article" date="2000" name="Nature">
        <title>Sequence and analysis of chromosome 1 of the plant Arabidopsis thaliana.</title>
        <authorList>
            <person name="Theologis A."/>
            <person name="Ecker J.R."/>
            <person name="Palm C.J."/>
            <person name="Federspiel N.A."/>
            <person name="Kaul S."/>
            <person name="White O."/>
            <person name="Alonso J."/>
            <person name="Altafi H."/>
            <person name="Araujo R."/>
            <person name="Bowman C.L."/>
            <person name="Brooks S.Y."/>
            <person name="Buehler E."/>
            <person name="Chan A."/>
            <person name="Chao Q."/>
            <person name="Chen H."/>
            <person name="Cheuk R.F."/>
            <person name="Chin C.W."/>
            <person name="Chung M.K."/>
            <person name="Conn L."/>
            <person name="Conway A.B."/>
            <person name="Conway A.R."/>
            <person name="Creasy T.H."/>
            <person name="Dewar K."/>
            <person name="Dunn P."/>
            <person name="Etgu P."/>
            <person name="Feldblyum T.V."/>
            <person name="Feng J.-D."/>
            <person name="Fong B."/>
            <person name="Fujii C.Y."/>
            <person name="Gill J.E."/>
            <person name="Goldsmith A.D."/>
            <person name="Haas B."/>
            <person name="Hansen N.F."/>
            <person name="Hughes B."/>
            <person name="Huizar L."/>
            <person name="Hunter J.L."/>
            <person name="Jenkins J."/>
            <person name="Johnson-Hopson C."/>
            <person name="Khan S."/>
            <person name="Khaykin E."/>
            <person name="Kim C.J."/>
            <person name="Koo H.L."/>
            <person name="Kremenetskaia I."/>
            <person name="Kurtz D.B."/>
            <person name="Kwan A."/>
            <person name="Lam B."/>
            <person name="Langin-Hooper S."/>
            <person name="Lee A."/>
            <person name="Lee J.M."/>
            <person name="Lenz C.A."/>
            <person name="Li J.H."/>
            <person name="Li Y.-P."/>
            <person name="Lin X."/>
            <person name="Liu S.X."/>
            <person name="Liu Z.A."/>
            <person name="Luros J.S."/>
            <person name="Maiti R."/>
            <person name="Marziali A."/>
            <person name="Militscher J."/>
            <person name="Miranda M."/>
            <person name="Nguyen M."/>
            <person name="Nierman W.C."/>
            <person name="Osborne B.I."/>
            <person name="Pai G."/>
            <person name="Peterson J."/>
            <person name="Pham P.K."/>
            <person name="Rizzo M."/>
            <person name="Rooney T."/>
            <person name="Rowley D."/>
            <person name="Sakano H."/>
            <person name="Salzberg S.L."/>
            <person name="Schwartz J.R."/>
            <person name="Shinn P."/>
            <person name="Southwick A.M."/>
            <person name="Sun H."/>
            <person name="Tallon L.J."/>
            <person name="Tambunga G."/>
            <person name="Toriumi M.J."/>
            <person name="Town C.D."/>
            <person name="Utterback T."/>
            <person name="Van Aken S."/>
            <person name="Vaysberg M."/>
            <person name="Vysotskaia V.S."/>
            <person name="Walker M."/>
            <person name="Wu D."/>
            <person name="Yu G."/>
            <person name="Fraser C.M."/>
            <person name="Venter J.C."/>
            <person name="Davis R.W."/>
        </authorList>
    </citation>
    <scope>NUCLEOTIDE SEQUENCE [LARGE SCALE GENOMIC DNA]</scope>
    <source>
        <strain>cv. Columbia</strain>
    </source>
</reference>
<reference key="3">
    <citation type="journal article" date="2017" name="Plant J.">
        <title>Araport11: a complete reannotation of the Arabidopsis thaliana reference genome.</title>
        <authorList>
            <person name="Cheng C.Y."/>
            <person name="Krishnakumar V."/>
            <person name="Chan A.P."/>
            <person name="Thibaud-Nissen F."/>
            <person name="Schobel S."/>
            <person name="Town C.D."/>
        </authorList>
    </citation>
    <scope>GENOME REANNOTATION</scope>
    <source>
        <strain>cv. Columbia</strain>
    </source>
</reference>
<reference key="4">
    <citation type="submission" date="2006-07" db="EMBL/GenBank/DDBJ databases">
        <title>Large-scale analysis of RIKEN Arabidopsis full-length (RAFL) cDNAs.</title>
        <authorList>
            <person name="Totoki Y."/>
            <person name="Seki M."/>
            <person name="Ishida J."/>
            <person name="Nakajima M."/>
            <person name="Enju A."/>
            <person name="Kamiya A."/>
            <person name="Narusaka M."/>
            <person name="Shin-i T."/>
            <person name="Nakagawa M."/>
            <person name="Sakamoto N."/>
            <person name="Oishi K."/>
            <person name="Kohara Y."/>
            <person name="Kobayashi M."/>
            <person name="Toyoda A."/>
            <person name="Sakaki Y."/>
            <person name="Sakurai T."/>
            <person name="Iida K."/>
            <person name="Akiyama K."/>
            <person name="Satou M."/>
            <person name="Toyoda T."/>
            <person name="Konagaya A."/>
            <person name="Carninci P."/>
            <person name="Kawai J."/>
            <person name="Hayashizaki Y."/>
            <person name="Shinozaki K."/>
        </authorList>
    </citation>
    <scope>NUCLEOTIDE SEQUENCE [LARGE SCALE MRNA]</scope>
    <source>
        <strain>cv. Columbia</strain>
    </source>
</reference>
<reference key="5">
    <citation type="journal article" date="2012" name="Front. Plant Sci.">
        <title>Plant glycosyltransferases beyond CAZy: a perspective on DUF families.</title>
        <authorList>
            <person name="Hansen S.F."/>
            <person name="Harholt J."/>
            <person name="Oikawa A."/>
            <person name="Scheller H.V."/>
        </authorList>
    </citation>
    <scope>GENE FAMILY</scope>
    <scope>REVIEW</scope>
</reference>
<reference key="6">
    <citation type="journal article" date="2012" name="PLoS ONE">
        <title>Identification of putative rhamnogalacturonan-II specific glycosyltransferases in Arabidopsis using a combination of bioinformatics approaches.</title>
        <authorList>
            <person name="Voxeur A."/>
            <person name="Andre A."/>
            <person name="Breton C."/>
            <person name="Lerouge P."/>
        </authorList>
    </citation>
    <scope>GENE FAMILY</scope>
</reference>
<reference key="7">
    <citation type="journal article" date="2013" name="Plant J.">
        <title>Identification of an additional protein involved in mannan biosynthesis.</title>
        <authorList>
            <person name="Wang Y."/>
            <person name="Mortimer J.C."/>
            <person name="Davis J."/>
            <person name="Dupree P."/>
            <person name="Keegstra K."/>
        </authorList>
    </citation>
    <scope>GENE FAMILY</scope>
    <scope>SUBCELLULAR LOCATION</scope>
    <scope>TISSUE SPECIFICITY</scope>
    <scope>FUNCTION</scope>
</reference>
<reference key="8">
    <citation type="journal article" date="2014" name="Plant J.">
        <title>The plant glycosyltransferase clone collection for functional genomics.</title>
        <authorList>
            <person name="Lao J."/>
            <person name="Oikawa A."/>
            <person name="Bromley J.R."/>
            <person name="McInerney P."/>
            <person name="Suttangkakul A."/>
            <person name="Smith-Moritz A.M."/>
            <person name="Plahar H."/>
            <person name="Chiu T.-Y."/>
            <person name="Gonzalez Fernandez-Nino S.M.G."/>
            <person name="Ebert B."/>
            <person name="Yang F."/>
            <person name="Christiansen K.M."/>
            <person name="Hansen S.F."/>
            <person name="Stonebloom S."/>
            <person name="Adams P.D."/>
            <person name="Ronald P.C."/>
            <person name="Hillson N.J."/>
            <person name="Hadi M.Z."/>
            <person name="Vega-Sanchez M.E."/>
            <person name="Loque D."/>
            <person name="Scheller H.V."/>
            <person name="Heazlewood J.L."/>
        </authorList>
    </citation>
    <scope>WEB RESOURCE</scope>
</reference>
<sequence>MGVDLRQVVAGILTITMFVMLGQMLHRDYFDAVQEKVQGDAHDIEFHGSKVAVEDGLVRAFEAGTKGPWMEDSHELKPCWSISQSDEAVSSKGYVTFSLTNGPEYHVSQITDAVMVAKHLGATLVLPDIRGSKPGDEMKFEDIYDVDKLIKTLESVVKVVRKLPSHVSLRDIAIVKVPTRVAEDYIKEHIDPIFKSKGNIRVTTYFPSVNLRKSSQGAETDPVSCLAMFGSLELQPAVNELVESMIQRLKTHSKKSGGRFIAIDLRVEILEKKNCHETGAVGSKTCYNAQEIALFLRKLGFDSDTTIYLTQPRWESSLNILKDIFPKTYTKEAIMPSDKKTKYLELENSEYENVIDFYISSRSDVFVPAIPGLFYANTVGKRIALGKPQVLVPAEISGTSGLPANYISPYISKKNHLAYSCFC</sequence>
<keyword id="KW-0119">Carbohydrate metabolism</keyword>
<keyword id="KW-0961">Cell wall biogenesis/degradation</keyword>
<keyword id="KW-0294">Fucose metabolism</keyword>
<keyword id="KW-0328">Glycosyltransferase</keyword>
<keyword id="KW-0333">Golgi apparatus</keyword>
<keyword id="KW-0472">Membrane</keyword>
<keyword id="KW-1185">Reference proteome</keyword>
<keyword id="KW-0735">Signal-anchor</keyword>
<keyword id="KW-0808">Transferase</keyword>
<keyword id="KW-0812">Transmembrane</keyword>
<keyword id="KW-1133">Transmembrane helix</keyword>
<feature type="chain" id="PRO_0000442075" description="Protein MANNAN SYNTHESIS-RELATED 2">
    <location>
        <begin position="1"/>
        <end position="423"/>
    </location>
</feature>
<feature type="topological domain" description="Cytoplasmic" evidence="4">
    <location>
        <begin position="1"/>
        <end position="6"/>
    </location>
</feature>
<feature type="transmembrane region" description="Helical; Signal-anchor for type II membrane protein" evidence="4">
    <location>
        <begin position="7"/>
        <end position="26"/>
    </location>
</feature>
<feature type="topological domain" description="Lumenal" evidence="4">
    <location>
        <begin position="27"/>
        <end position="423"/>
    </location>
</feature>
<feature type="binding site" evidence="1">
    <location>
        <begin position="264"/>
        <end position="266"/>
    </location>
    <ligand>
        <name>substrate</name>
    </ligand>
</feature>
<gene>
    <name evidence="3 7" type="primary">MSR2</name>
    <name evidence="4" type="synonym">OFUT12</name>
    <name evidence="5" type="ordered locus">At1g51630</name>
    <name evidence="6" type="ORF">F19C24.14</name>
</gene>
<comment type="function">
    <text evidence="2">Glycosyltransferase involved in mannan biosynthesis.</text>
</comment>
<comment type="pathway">
    <text evidence="4">Glycan biosynthesis.</text>
</comment>
<comment type="subcellular location">
    <subcellularLocation>
        <location evidence="2">Golgi apparatus membrane</location>
        <topology evidence="4">Single-pass type II membrane protein</topology>
    </subcellularLocation>
</comment>
<comment type="tissue specificity">
    <text evidence="2">Widely expressed.</text>
</comment>
<comment type="similarity">
    <text evidence="4">Belongs to the glycosyltransferase GT106 family.</text>
</comment>
<comment type="sequence caution" evidence="4">
    <conflict type="erroneous gene model prediction">
        <sequence resource="EMBL-CDS" id="AAG50891"/>
    </conflict>
</comment>
<protein>
    <recommendedName>
        <fullName evidence="3">Protein MANNAN SYNTHESIS-RELATED 2</fullName>
        <shortName evidence="3">AtMSR2</shortName>
        <ecNumber evidence="4">2.4.1.-</ecNumber>
    </recommendedName>
    <alternativeName>
        <fullName evidence="4">O-fucosyltransferase 12</fullName>
        <shortName evidence="4">O-FucT-12</shortName>
    </alternativeName>
    <alternativeName>
        <fullName evidence="7">O-fucosyltransferase family protein</fullName>
    </alternativeName>
</protein>
<organism>
    <name type="scientific">Arabidopsis thaliana</name>
    <name type="common">Mouse-ear cress</name>
    <dbReference type="NCBI Taxonomy" id="3702"/>
    <lineage>
        <taxon>Eukaryota</taxon>
        <taxon>Viridiplantae</taxon>
        <taxon>Streptophyta</taxon>
        <taxon>Embryophyta</taxon>
        <taxon>Tracheophyta</taxon>
        <taxon>Spermatophyta</taxon>
        <taxon>Magnoliopsida</taxon>
        <taxon>eudicotyledons</taxon>
        <taxon>Gunneridae</taxon>
        <taxon>Pentapetalae</taxon>
        <taxon>rosids</taxon>
        <taxon>malvids</taxon>
        <taxon>Brassicales</taxon>
        <taxon>Brassicaceae</taxon>
        <taxon>Camelineae</taxon>
        <taxon>Arabidopsis</taxon>
    </lineage>
</organism>
<name>MSR2_ARATH</name>